<comment type="function">
    <text evidence="1">NDH-1 shuttles electrons from NAD(P)H, via FMN and iron-sulfur (Fe-S) centers, to quinones in the respiratory chain. The immediate electron acceptor for the enzyme in this species is believed to be plastoquinone. Couples the redox reaction to proton translocation (for every two electrons transferred, four hydrogen ions are translocated across the cytoplasmic membrane), and thus conserves the redox energy in a proton gradient.</text>
</comment>
<comment type="catalytic activity">
    <reaction evidence="1">
        <text>a plastoquinone + NADH + (n+1) H(+)(in) = a plastoquinol + NAD(+) + n H(+)(out)</text>
        <dbReference type="Rhea" id="RHEA:42608"/>
        <dbReference type="Rhea" id="RHEA-COMP:9561"/>
        <dbReference type="Rhea" id="RHEA-COMP:9562"/>
        <dbReference type="ChEBI" id="CHEBI:15378"/>
        <dbReference type="ChEBI" id="CHEBI:17757"/>
        <dbReference type="ChEBI" id="CHEBI:57540"/>
        <dbReference type="ChEBI" id="CHEBI:57945"/>
        <dbReference type="ChEBI" id="CHEBI:62192"/>
    </reaction>
</comment>
<comment type="catalytic activity">
    <reaction evidence="1">
        <text>a plastoquinone + NADPH + (n+1) H(+)(in) = a plastoquinol + NADP(+) + n H(+)(out)</text>
        <dbReference type="Rhea" id="RHEA:42612"/>
        <dbReference type="Rhea" id="RHEA-COMP:9561"/>
        <dbReference type="Rhea" id="RHEA-COMP:9562"/>
        <dbReference type="ChEBI" id="CHEBI:15378"/>
        <dbReference type="ChEBI" id="CHEBI:17757"/>
        <dbReference type="ChEBI" id="CHEBI:57783"/>
        <dbReference type="ChEBI" id="CHEBI:58349"/>
        <dbReference type="ChEBI" id="CHEBI:62192"/>
    </reaction>
</comment>
<comment type="subcellular location">
    <subcellularLocation>
        <location evidence="1">Cellular thylakoid membrane</location>
        <topology evidence="1">Multi-pass membrane protein</topology>
    </subcellularLocation>
</comment>
<comment type="similarity">
    <text evidence="1">Belongs to the complex I subunit 4 family.</text>
</comment>
<evidence type="ECO:0000255" key="1">
    <source>
        <dbReference type="HAMAP-Rule" id="MF_00491"/>
    </source>
</evidence>
<feature type="chain" id="PRO_0000343239" description="NAD(P)H-quinone oxidoreductase chain 4">
    <location>
        <begin position="1"/>
        <end position="534"/>
    </location>
</feature>
<feature type="transmembrane region" description="Helical" evidence="1">
    <location>
        <begin position="12"/>
        <end position="32"/>
    </location>
</feature>
<feature type="transmembrane region" description="Helical" evidence="1">
    <location>
        <begin position="44"/>
        <end position="64"/>
    </location>
</feature>
<feature type="transmembrane region" description="Helical" evidence="1">
    <location>
        <begin position="94"/>
        <end position="114"/>
    </location>
</feature>
<feature type="transmembrane region" description="Helical" evidence="1">
    <location>
        <begin position="120"/>
        <end position="140"/>
    </location>
</feature>
<feature type="transmembrane region" description="Helical" evidence="1">
    <location>
        <begin position="144"/>
        <end position="164"/>
    </location>
</feature>
<feature type="transmembrane region" description="Helical" evidence="1">
    <location>
        <begin position="176"/>
        <end position="196"/>
    </location>
</feature>
<feature type="transmembrane region" description="Helical" evidence="1">
    <location>
        <begin position="220"/>
        <end position="240"/>
    </location>
</feature>
<feature type="transmembrane region" description="Helical" evidence="1">
    <location>
        <begin position="251"/>
        <end position="271"/>
    </location>
</feature>
<feature type="transmembrane region" description="Helical" evidence="1">
    <location>
        <begin position="285"/>
        <end position="305"/>
    </location>
</feature>
<feature type="transmembrane region" description="Helical" evidence="1">
    <location>
        <begin position="314"/>
        <end position="334"/>
    </location>
</feature>
<feature type="transmembrane region" description="Helical" evidence="1">
    <location>
        <begin position="340"/>
        <end position="360"/>
    </location>
</feature>
<feature type="transmembrane region" description="Helical" evidence="1">
    <location>
        <begin position="384"/>
        <end position="404"/>
    </location>
</feature>
<feature type="transmembrane region" description="Helical" evidence="1">
    <location>
        <begin position="425"/>
        <end position="445"/>
    </location>
</feature>
<feature type="transmembrane region" description="Helical" evidence="1">
    <location>
        <begin position="472"/>
        <end position="492"/>
    </location>
</feature>
<dbReference type="EC" id="7.1.1.-" evidence="1"/>
<dbReference type="EMBL" id="CP000111">
    <property type="protein sequence ID" value="ABB49214.1"/>
    <property type="molecule type" value="Genomic_DNA"/>
</dbReference>
<dbReference type="RefSeq" id="WP_011375718.1">
    <property type="nucleotide sequence ID" value="NC_007577.1"/>
</dbReference>
<dbReference type="SMR" id="Q31D31"/>
<dbReference type="STRING" id="74546.PMT9312_0152"/>
<dbReference type="KEGG" id="pmi:PMT9312_0152"/>
<dbReference type="eggNOG" id="COG1008">
    <property type="taxonomic scope" value="Bacteria"/>
</dbReference>
<dbReference type="HOGENOM" id="CLU_007100_4_0_3"/>
<dbReference type="OrthoDB" id="9811718at2"/>
<dbReference type="Proteomes" id="UP000002715">
    <property type="component" value="Chromosome"/>
</dbReference>
<dbReference type="GO" id="GO:0031676">
    <property type="term" value="C:plasma membrane-derived thylakoid membrane"/>
    <property type="evidence" value="ECO:0007669"/>
    <property type="project" value="UniProtKB-SubCell"/>
</dbReference>
<dbReference type="GO" id="GO:0008137">
    <property type="term" value="F:NADH dehydrogenase (ubiquinone) activity"/>
    <property type="evidence" value="ECO:0007669"/>
    <property type="project" value="InterPro"/>
</dbReference>
<dbReference type="GO" id="GO:0048039">
    <property type="term" value="F:ubiquinone binding"/>
    <property type="evidence" value="ECO:0007669"/>
    <property type="project" value="TreeGrafter"/>
</dbReference>
<dbReference type="GO" id="GO:0042773">
    <property type="term" value="P:ATP synthesis coupled electron transport"/>
    <property type="evidence" value="ECO:0007669"/>
    <property type="project" value="InterPro"/>
</dbReference>
<dbReference type="GO" id="GO:0015990">
    <property type="term" value="P:electron transport coupled proton transport"/>
    <property type="evidence" value="ECO:0007669"/>
    <property type="project" value="TreeGrafter"/>
</dbReference>
<dbReference type="HAMAP" id="MF_00491">
    <property type="entry name" value="NDH1_NuoM"/>
    <property type="match status" value="1"/>
</dbReference>
<dbReference type="InterPro" id="IPR022997">
    <property type="entry name" value="NADH_Q_OxRdtase_chain4"/>
</dbReference>
<dbReference type="InterPro" id="IPR010227">
    <property type="entry name" value="NADH_Q_OxRdtase_chainM/4"/>
</dbReference>
<dbReference type="InterPro" id="IPR003918">
    <property type="entry name" value="NADH_UbQ_OxRdtase"/>
</dbReference>
<dbReference type="InterPro" id="IPR001750">
    <property type="entry name" value="ND/Mrp_TM"/>
</dbReference>
<dbReference type="NCBIfam" id="TIGR01972">
    <property type="entry name" value="NDH_I_M"/>
    <property type="match status" value="1"/>
</dbReference>
<dbReference type="NCBIfam" id="NF002713">
    <property type="entry name" value="PRK02546.1"/>
    <property type="match status" value="1"/>
</dbReference>
<dbReference type="NCBIfam" id="NF009212">
    <property type="entry name" value="PRK12561.1"/>
    <property type="match status" value="1"/>
</dbReference>
<dbReference type="PANTHER" id="PTHR43507:SF21">
    <property type="entry name" value="NAD(P)H-QUINONE OXIDOREDUCTASE CHAIN 4, CHLOROPLASTIC"/>
    <property type="match status" value="1"/>
</dbReference>
<dbReference type="PANTHER" id="PTHR43507">
    <property type="entry name" value="NADH-UBIQUINONE OXIDOREDUCTASE CHAIN 4"/>
    <property type="match status" value="1"/>
</dbReference>
<dbReference type="Pfam" id="PF00361">
    <property type="entry name" value="Proton_antipo_M"/>
    <property type="match status" value="1"/>
</dbReference>
<dbReference type="PRINTS" id="PR01437">
    <property type="entry name" value="NUOXDRDTASE4"/>
</dbReference>
<organism>
    <name type="scientific">Prochlorococcus marinus (strain MIT 9312)</name>
    <dbReference type="NCBI Taxonomy" id="74546"/>
    <lineage>
        <taxon>Bacteria</taxon>
        <taxon>Bacillati</taxon>
        <taxon>Cyanobacteriota</taxon>
        <taxon>Cyanophyceae</taxon>
        <taxon>Synechococcales</taxon>
        <taxon>Prochlorococcaceae</taxon>
        <taxon>Prochlorococcus</taxon>
    </lineage>
</organism>
<keyword id="KW-0472">Membrane</keyword>
<keyword id="KW-0520">NAD</keyword>
<keyword id="KW-0521">NADP</keyword>
<keyword id="KW-0618">Plastoquinone</keyword>
<keyword id="KW-0874">Quinone</keyword>
<keyword id="KW-0793">Thylakoid</keyword>
<keyword id="KW-1278">Translocase</keyword>
<keyword id="KW-0812">Transmembrane</keyword>
<keyword id="KW-1133">Transmembrane helix</keyword>
<gene>
    <name evidence="1" type="primary">ndhD</name>
    <name type="ordered locus">PMT9312_0152</name>
</gene>
<protein>
    <recommendedName>
        <fullName evidence="1">NAD(P)H-quinone oxidoreductase chain 4</fullName>
        <ecNumber evidence="1">7.1.1.-</ecNumber>
    </recommendedName>
    <alternativeName>
        <fullName evidence="1">NAD(P)H dehydrogenase I, chain 4</fullName>
    </alternativeName>
    <alternativeName>
        <fullName evidence="1">NDH-1, chain 4</fullName>
    </alternativeName>
</protein>
<proteinExistence type="inferred from homology"/>
<accession>Q31D31</accession>
<sequence>MLGTLGSGFSNFPWLSASILFPIGSAFVIPFFPDKGDGKEVRWFALSIALTTFLITVGSYINGFDINNENVQLKENVSWLPDLGLTWSVGADGISMPLILLTSFITALAVLAAWPVKFKPKLFFFLILVMDGGQIAVFAVQDMLLFFLTWELELIPVYLLLAIWGGKNRQYAATKFIIYTAGSSIFILLAALAMGFYGTEIPNFEFSHLAAQDFTQKFQILCYVGLLIAFGVKLPIVPLHTWLPDAHGEATAPVHMLLAGILLKMGGYALLRFNAQLLPAAHAQFAPLLIVLGVVNIIYAALTSFAQRNLKRKIAYSSISHMGFVLIGIGSFSSLGTSGAMLQMVSHGLIGASLFFLVGATYDRTKTLKLDEMSGVGQKMRIMFALWTACSLASLALPGMSGFVSELMVFTGFVTDEVYTLPFRVIMASLAAIGVILTPIYLLSMLREIFFGKENPKLTEERKLIDAEPREVYIIACLLLPIIGIGLYPRLVTESYLASINNLVDRDLTAVKSAVKTNIFSGTKKNEILKAPTI</sequence>
<name>NU4C_PROM9</name>
<reference key="1">
    <citation type="journal article" date="2006" name="Science">
        <title>Genomic islands and the ecology and evolution of Prochlorococcus.</title>
        <authorList>
            <person name="Coleman M.L."/>
            <person name="Sullivan M.B."/>
            <person name="Martiny A.C."/>
            <person name="Steglich C."/>
            <person name="Barry K."/>
            <person name="Delong E.F."/>
            <person name="Chisholm S.W."/>
        </authorList>
    </citation>
    <scope>NUCLEOTIDE SEQUENCE [LARGE SCALE GENOMIC DNA]</scope>
    <source>
        <strain>MIT 9312</strain>
    </source>
</reference>